<keyword id="KW-1185">Reference proteome</keyword>
<keyword id="KW-0687">Ribonucleoprotein</keyword>
<keyword id="KW-0689">Ribosomal protein</keyword>
<proteinExistence type="inferred from homology"/>
<dbReference type="EMBL" id="CR954253">
    <property type="protein sequence ID" value="CAI98146.1"/>
    <property type="molecule type" value="Genomic_DNA"/>
</dbReference>
<dbReference type="RefSeq" id="WP_011544006.1">
    <property type="nucleotide sequence ID" value="NZ_JQAV01000006.1"/>
</dbReference>
<dbReference type="SMR" id="Q1G9N6"/>
<dbReference type="STRING" id="390333.Ldb1345"/>
<dbReference type="KEGG" id="ldb:Ldb1345"/>
<dbReference type="eggNOG" id="COG0052">
    <property type="taxonomic scope" value="Bacteria"/>
</dbReference>
<dbReference type="HOGENOM" id="CLU_040318_1_2_9"/>
<dbReference type="BioCyc" id="LDEL390333:LDB_RS05760-MONOMER"/>
<dbReference type="Proteomes" id="UP000001259">
    <property type="component" value="Chromosome"/>
</dbReference>
<dbReference type="GO" id="GO:0022627">
    <property type="term" value="C:cytosolic small ribosomal subunit"/>
    <property type="evidence" value="ECO:0007669"/>
    <property type="project" value="TreeGrafter"/>
</dbReference>
<dbReference type="GO" id="GO:0003735">
    <property type="term" value="F:structural constituent of ribosome"/>
    <property type="evidence" value="ECO:0007669"/>
    <property type="project" value="InterPro"/>
</dbReference>
<dbReference type="GO" id="GO:0006412">
    <property type="term" value="P:translation"/>
    <property type="evidence" value="ECO:0007669"/>
    <property type="project" value="UniProtKB-UniRule"/>
</dbReference>
<dbReference type="CDD" id="cd01425">
    <property type="entry name" value="RPS2"/>
    <property type="match status" value="1"/>
</dbReference>
<dbReference type="FunFam" id="1.10.287.610:FF:000001">
    <property type="entry name" value="30S ribosomal protein S2"/>
    <property type="match status" value="1"/>
</dbReference>
<dbReference type="Gene3D" id="3.40.50.10490">
    <property type="entry name" value="Glucose-6-phosphate isomerase like protein, domain 1"/>
    <property type="match status" value="1"/>
</dbReference>
<dbReference type="Gene3D" id="1.10.287.610">
    <property type="entry name" value="Helix hairpin bin"/>
    <property type="match status" value="1"/>
</dbReference>
<dbReference type="HAMAP" id="MF_00291_B">
    <property type="entry name" value="Ribosomal_uS2_B"/>
    <property type="match status" value="1"/>
</dbReference>
<dbReference type="InterPro" id="IPR001865">
    <property type="entry name" value="Ribosomal_uS2"/>
</dbReference>
<dbReference type="InterPro" id="IPR005706">
    <property type="entry name" value="Ribosomal_uS2_bac/mit/plastid"/>
</dbReference>
<dbReference type="InterPro" id="IPR018130">
    <property type="entry name" value="Ribosomal_uS2_CS"/>
</dbReference>
<dbReference type="InterPro" id="IPR023591">
    <property type="entry name" value="Ribosomal_uS2_flav_dom_sf"/>
</dbReference>
<dbReference type="NCBIfam" id="TIGR01011">
    <property type="entry name" value="rpsB_bact"/>
    <property type="match status" value="1"/>
</dbReference>
<dbReference type="PANTHER" id="PTHR12534">
    <property type="entry name" value="30S RIBOSOMAL PROTEIN S2 PROKARYOTIC AND ORGANELLAR"/>
    <property type="match status" value="1"/>
</dbReference>
<dbReference type="PANTHER" id="PTHR12534:SF0">
    <property type="entry name" value="SMALL RIBOSOMAL SUBUNIT PROTEIN US2M"/>
    <property type="match status" value="1"/>
</dbReference>
<dbReference type="Pfam" id="PF00318">
    <property type="entry name" value="Ribosomal_S2"/>
    <property type="match status" value="1"/>
</dbReference>
<dbReference type="PRINTS" id="PR00395">
    <property type="entry name" value="RIBOSOMALS2"/>
</dbReference>
<dbReference type="SUPFAM" id="SSF52313">
    <property type="entry name" value="Ribosomal protein S2"/>
    <property type="match status" value="1"/>
</dbReference>
<dbReference type="PROSITE" id="PS00962">
    <property type="entry name" value="RIBOSOMAL_S2_1"/>
    <property type="match status" value="1"/>
</dbReference>
<dbReference type="PROSITE" id="PS00963">
    <property type="entry name" value="RIBOSOMAL_S2_2"/>
    <property type="match status" value="1"/>
</dbReference>
<comment type="similarity">
    <text evidence="1">Belongs to the universal ribosomal protein uS2 family.</text>
</comment>
<name>RS2_LACDA</name>
<organism>
    <name type="scientific">Lactobacillus delbrueckii subsp. bulgaricus (strain ATCC 11842 / DSM 20081 / BCRC 10696 / JCM 1002 / NBRC 13953 / NCIMB 11778 / NCTC 12712 / WDCM 00102 / Lb 14)</name>
    <dbReference type="NCBI Taxonomy" id="390333"/>
    <lineage>
        <taxon>Bacteria</taxon>
        <taxon>Bacillati</taxon>
        <taxon>Bacillota</taxon>
        <taxon>Bacilli</taxon>
        <taxon>Lactobacillales</taxon>
        <taxon>Lactobacillaceae</taxon>
        <taxon>Lactobacillus</taxon>
    </lineage>
</organism>
<feature type="chain" id="PRO_1000003983" description="Small ribosomal subunit protein uS2">
    <location>
        <begin position="1"/>
        <end position="253"/>
    </location>
</feature>
<feature type="region of interest" description="Disordered" evidence="2">
    <location>
        <begin position="226"/>
        <end position="253"/>
    </location>
</feature>
<feature type="compositionally biased region" description="Acidic residues" evidence="2">
    <location>
        <begin position="239"/>
        <end position="253"/>
    </location>
</feature>
<gene>
    <name evidence="1" type="primary">rpsB</name>
    <name type="ordered locus">Ldb1345</name>
</gene>
<evidence type="ECO:0000255" key="1">
    <source>
        <dbReference type="HAMAP-Rule" id="MF_00291"/>
    </source>
</evidence>
<evidence type="ECO:0000256" key="2">
    <source>
        <dbReference type="SAM" id="MobiDB-lite"/>
    </source>
</evidence>
<evidence type="ECO:0000305" key="3"/>
<accession>Q1G9N6</accession>
<reference key="1">
    <citation type="journal article" date="2006" name="Proc. Natl. Acad. Sci. U.S.A.">
        <title>The complete genome sequence of Lactobacillus bulgaricus reveals extensive and ongoing reductive evolution.</title>
        <authorList>
            <person name="van de Guchte M."/>
            <person name="Penaud S."/>
            <person name="Grimaldi C."/>
            <person name="Barbe V."/>
            <person name="Bryson K."/>
            <person name="Nicolas P."/>
            <person name="Robert C."/>
            <person name="Oztas S."/>
            <person name="Mangenot S."/>
            <person name="Couloux A."/>
            <person name="Loux V."/>
            <person name="Dervyn R."/>
            <person name="Bossy R."/>
            <person name="Bolotin A."/>
            <person name="Batto J.-M."/>
            <person name="Walunas T."/>
            <person name="Gibrat J.-F."/>
            <person name="Bessieres P."/>
            <person name="Weissenbach J."/>
            <person name="Ehrlich S.D."/>
            <person name="Maguin E."/>
        </authorList>
    </citation>
    <scope>NUCLEOTIDE SEQUENCE [LARGE SCALE GENOMIC DNA]</scope>
    <source>
        <strain>ATCC 11842 / DSM 20081 / BCRC 10696 / JCM 1002 / NBRC 13953 / NCIMB 11778 / NCTC 12712 / WDCM 00102 / Lb 14</strain>
    </source>
</reference>
<sequence length="253" mass="28386">MSVVSMKQLLEAGVHFGHQTRRWDPKMKPYIFTQRNDIYIIDLQKTIKMLDDAYNYVKAVAQDDGVFLFVGTKKQAQEAIAEEATRAGQYYVNQRWLGGTLTNWTTIQSRVKRLKDLKKMAEDGTFDVLPKKEVSLLTKEMDKLQKFLGGIEDMPRIPDVMFVVDPKKEKIAVHEANKLGIPVVAMVDTNTDPTPIDVIIPSNDDAIRAIRLIAGTMADAVIEGKQGADNADVEKELSESVEENSAEEVDDAE</sequence>
<protein>
    <recommendedName>
        <fullName evidence="1">Small ribosomal subunit protein uS2</fullName>
    </recommendedName>
    <alternativeName>
        <fullName evidence="3">30S ribosomal protein S2</fullName>
    </alternativeName>
</protein>